<name>GPDA_LEPBJ</name>
<dbReference type="EC" id="1.1.1.94" evidence="1"/>
<dbReference type="EMBL" id="CP000350">
    <property type="protein sequence ID" value="ABJ75111.1"/>
    <property type="molecule type" value="Genomic_DNA"/>
</dbReference>
<dbReference type="RefSeq" id="WP_011671522.1">
    <property type="nucleotide sequence ID" value="NC_008510.1"/>
</dbReference>
<dbReference type="SMR" id="Q04VF9"/>
<dbReference type="KEGG" id="lbj:LBJ_0395"/>
<dbReference type="HOGENOM" id="CLU_033449_0_2_12"/>
<dbReference type="UniPathway" id="UPA00940"/>
<dbReference type="Proteomes" id="UP000000656">
    <property type="component" value="Chromosome 1"/>
</dbReference>
<dbReference type="GO" id="GO:0005829">
    <property type="term" value="C:cytosol"/>
    <property type="evidence" value="ECO:0007669"/>
    <property type="project" value="TreeGrafter"/>
</dbReference>
<dbReference type="GO" id="GO:0047952">
    <property type="term" value="F:glycerol-3-phosphate dehydrogenase [NAD(P)+] activity"/>
    <property type="evidence" value="ECO:0007669"/>
    <property type="project" value="UniProtKB-UniRule"/>
</dbReference>
<dbReference type="GO" id="GO:0051287">
    <property type="term" value="F:NAD binding"/>
    <property type="evidence" value="ECO:0007669"/>
    <property type="project" value="InterPro"/>
</dbReference>
<dbReference type="GO" id="GO:0005975">
    <property type="term" value="P:carbohydrate metabolic process"/>
    <property type="evidence" value="ECO:0007669"/>
    <property type="project" value="InterPro"/>
</dbReference>
<dbReference type="GO" id="GO:0046167">
    <property type="term" value="P:glycerol-3-phosphate biosynthetic process"/>
    <property type="evidence" value="ECO:0007669"/>
    <property type="project" value="UniProtKB-UniRule"/>
</dbReference>
<dbReference type="GO" id="GO:0046168">
    <property type="term" value="P:glycerol-3-phosphate catabolic process"/>
    <property type="evidence" value="ECO:0007669"/>
    <property type="project" value="InterPro"/>
</dbReference>
<dbReference type="GO" id="GO:0006650">
    <property type="term" value="P:glycerophospholipid metabolic process"/>
    <property type="evidence" value="ECO:0007669"/>
    <property type="project" value="UniProtKB-UniRule"/>
</dbReference>
<dbReference type="GO" id="GO:0008654">
    <property type="term" value="P:phospholipid biosynthetic process"/>
    <property type="evidence" value="ECO:0007669"/>
    <property type="project" value="UniProtKB-KW"/>
</dbReference>
<dbReference type="FunFam" id="1.10.1040.10:FF:000001">
    <property type="entry name" value="Glycerol-3-phosphate dehydrogenase [NAD(P)+]"/>
    <property type="match status" value="1"/>
</dbReference>
<dbReference type="FunFam" id="3.40.50.720:FF:000019">
    <property type="entry name" value="Glycerol-3-phosphate dehydrogenase [NAD(P)+]"/>
    <property type="match status" value="1"/>
</dbReference>
<dbReference type="Gene3D" id="1.10.1040.10">
    <property type="entry name" value="N-(1-d-carboxylethyl)-l-norvaline Dehydrogenase, domain 2"/>
    <property type="match status" value="1"/>
</dbReference>
<dbReference type="Gene3D" id="3.40.50.720">
    <property type="entry name" value="NAD(P)-binding Rossmann-like Domain"/>
    <property type="match status" value="1"/>
</dbReference>
<dbReference type="HAMAP" id="MF_00394">
    <property type="entry name" value="NAD_Glyc3P_dehydrog"/>
    <property type="match status" value="1"/>
</dbReference>
<dbReference type="InterPro" id="IPR008927">
    <property type="entry name" value="6-PGluconate_DH-like_C_sf"/>
</dbReference>
<dbReference type="InterPro" id="IPR013328">
    <property type="entry name" value="6PGD_dom2"/>
</dbReference>
<dbReference type="InterPro" id="IPR006168">
    <property type="entry name" value="G3P_DH_NAD-dep"/>
</dbReference>
<dbReference type="InterPro" id="IPR006109">
    <property type="entry name" value="G3P_DH_NAD-dep_C"/>
</dbReference>
<dbReference type="InterPro" id="IPR011128">
    <property type="entry name" value="G3P_DH_NAD-dep_N"/>
</dbReference>
<dbReference type="InterPro" id="IPR036291">
    <property type="entry name" value="NAD(P)-bd_dom_sf"/>
</dbReference>
<dbReference type="NCBIfam" id="NF000940">
    <property type="entry name" value="PRK00094.1-2"/>
    <property type="match status" value="1"/>
</dbReference>
<dbReference type="NCBIfam" id="NF000941">
    <property type="entry name" value="PRK00094.1-3"/>
    <property type="match status" value="1"/>
</dbReference>
<dbReference type="NCBIfam" id="NF000942">
    <property type="entry name" value="PRK00094.1-4"/>
    <property type="match status" value="1"/>
</dbReference>
<dbReference type="PANTHER" id="PTHR11728">
    <property type="entry name" value="GLYCEROL-3-PHOSPHATE DEHYDROGENASE"/>
    <property type="match status" value="1"/>
</dbReference>
<dbReference type="PANTHER" id="PTHR11728:SF1">
    <property type="entry name" value="GLYCEROL-3-PHOSPHATE DEHYDROGENASE [NAD(+)] 2, CHLOROPLASTIC"/>
    <property type="match status" value="1"/>
</dbReference>
<dbReference type="Pfam" id="PF07479">
    <property type="entry name" value="NAD_Gly3P_dh_C"/>
    <property type="match status" value="1"/>
</dbReference>
<dbReference type="Pfam" id="PF01210">
    <property type="entry name" value="NAD_Gly3P_dh_N"/>
    <property type="match status" value="1"/>
</dbReference>
<dbReference type="PIRSF" id="PIRSF000114">
    <property type="entry name" value="Glycerol-3-P_dh"/>
    <property type="match status" value="1"/>
</dbReference>
<dbReference type="PRINTS" id="PR00077">
    <property type="entry name" value="GPDHDRGNASE"/>
</dbReference>
<dbReference type="SUPFAM" id="SSF48179">
    <property type="entry name" value="6-phosphogluconate dehydrogenase C-terminal domain-like"/>
    <property type="match status" value="1"/>
</dbReference>
<dbReference type="SUPFAM" id="SSF51735">
    <property type="entry name" value="NAD(P)-binding Rossmann-fold domains"/>
    <property type="match status" value="1"/>
</dbReference>
<dbReference type="PROSITE" id="PS00957">
    <property type="entry name" value="NAD_G3PDH"/>
    <property type="match status" value="1"/>
</dbReference>
<comment type="function">
    <text evidence="1">Catalyzes the reduction of the glycolytic intermediate dihydroxyacetone phosphate (DHAP) to sn-glycerol 3-phosphate (G3P), the key precursor for phospholipid synthesis.</text>
</comment>
<comment type="catalytic activity">
    <reaction evidence="1">
        <text>sn-glycerol 3-phosphate + NAD(+) = dihydroxyacetone phosphate + NADH + H(+)</text>
        <dbReference type="Rhea" id="RHEA:11092"/>
        <dbReference type="ChEBI" id="CHEBI:15378"/>
        <dbReference type="ChEBI" id="CHEBI:57540"/>
        <dbReference type="ChEBI" id="CHEBI:57597"/>
        <dbReference type="ChEBI" id="CHEBI:57642"/>
        <dbReference type="ChEBI" id="CHEBI:57945"/>
        <dbReference type="EC" id="1.1.1.94"/>
    </reaction>
    <physiologicalReaction direction="right-to-left" evidence="1">
        <dbReference type="Rhea" id="RHEA:11094"/>
    </physiologicalReaction>
</comment>
<comment type="catalytic activity">
    <reaction evidence="1">
        <text>sn-glycerol 3-phosphate + NADP(+) = dihydroxyacetone phosphate + NADPH + H(+)</text>
        <dbReference type="Rhea" id="RHEA:11096"/>
        <dbReference type="ChEBI" id="CHEBI:15378"/>
        <dbReference type="ChEBI" id="CHEBI:57597"/>
        <dbReference type="ChEBI" id="CHEBI:57642"/>
        <dbReference type="ChEBI" id="CHEBI:57783"/>
        <dbReference type="ChEBI" id="CHEBI:58349"/>
        <dbReference type="EC" id="1.1.1.94"/>
    </reaction>
    <physiologicalReaction direction="right-to-left" evidence="1">
        <dbReference type="Rhea" id="RHEA:11098"/>
    </physiologicalReaction>
</comment>
<comment type="pathway">
    <text evidence="1">Membrane lipid metabolism; glycerophospholipid metabolism.</text>
</comment>
<comment type="subcellular location">
    <subcellularLocation>
        <location evidence="1">Cytoplasm</location>
    </subcellularLocation>
</comment>
<comment type="similarity">
    <text evidence="1">Belongs to the NAD-dependent glycerol-3-phosphate dehydrogenase family.</text>
</comment>
<reference key="1">
    <citation type="journal article" date="2006" name="Proc. Natl. Acad. Sci. U.S.A.">
        <title>Genome reduction in Leptospira borgpetersenii reflects limited transmission potential.</title>
        <authorList>
            <person name="Bulach D.M."/>
            <person name="Zuerner R.L."/>
            <person name="Wilson P."/>
            <person name="Seemann T."/>
            <person name="McGrath A."/>
            <person name="Cullen P.A."/>
            <person name="Davis J."/>
            <person name="Johnson M."/>
            <person name="Kuczek E."/>
            <person name="Alt D.P."/>
            <person name="Peterson-Burch B."/>
            <person name="Coppel R.L."/>
            <person name="Rood J.I."/>
            <person name="Davies J.K."/>
            <person name="Adler B."/>
        </authorList>
    </citation>
    <scope>NUCLEOTIDE SEQUENCE [LARGE SCALE GENOMIC DNA]</scope>
    <source>
        <strain>JB197</strain>
    </source>
</reference>
<organism>
    <name type="scientific">Leptospira borgpetersenii serovar Hardjo-bovis (strain JB197)</name>
    <dbReference type="NCBI Taxonomy" id="355277"/>
    <lineage>
        <taxon>Bacteria</taxon>
        <taxon>Pseudomonadati</taxon>
        <taxon>Spirochaetota</taxon>
        <taxon>Spirochaetia</taxon>
        <taxon>Leptospirales</taxon>
        <taxon>Leptospiraceae</taxon>
        <taxon>Leptospira</taxon>
    </lineage>
</organism>
<evidence type="ECO:0000255" key="1">
    <source>
        <dbReference type="HAMAP-Rule" id="MF_00394"/>
    </source>
</evidence>
<feature type="chain" id="PRO_1000049521" description="Glycerol-3-phosphate dehydrogenase [NAD(P)+]">
    <location>
        <begin position="1"/>
        <end position="335"/>
    </location>
</feature>
<feature type="active site" description="Proton acceptor" evidence="1">
    <location>
        <position position="191"/>
    </location>
</feature>
<feature type="binding site" evidence="1">
    <location>
        <position position="10"/>
    </location>
    <ligand>
        <name>NADPH</name>
        <dbReference type="ChEBI" id="CHEBI:57783"/>
    </ligand>
</feature>
<feature type="binding site" evidence="1">
    <location>
        <position position="11"/>
    </location>
    <ligand>
        <name>NADPH</name>
        <dbReference type="ChEBI" id="CHEBI:57783"/>
    </ligand>
</feature>
<feature type="binding site" evidence="1">
    <location>
        <position position="31"/>
    </location>
    <ligand>
        <name>NADPH</name>
        <dbReference type="ChEBI" id="CHEBI:57783"/>
    </ligand>
</feature>
<feature type="binding site" evidence="1">
    <location>
        <position position="105"/>
    </location>
    <ligand>
        <name>NADPH</name>
        <dbReference type="ChEBI" id="CHEBI:57783"/>
    </ligand>
</feature>
<feature type="binding site" evidence="1">
    <location>
        <position position="105"/>
    </location>
    <ligand>
        <name>sn-glycerol 3-phosphate</name>
        <dbReference type="ChEBI" id="CHEBI:57597"/>
    </ligand>
</feature>
<feature type="binding site" evidence="1">
    <location>
        <position position="136"/>
    </location>
    <ligand>
        <name>sn-glycerol 3-phosphate</name>
        <dbReference type="ChEBI" id="CHEBI:57597"/>
    </ligand>
</feature>
<feature type="binding site" evidence="1">
    <location>
        <position position="138"/>
    </location>
    <ligand>
        <name>sn-glycerol 3-phosphate</name>
        <dbReference type="ChEBI" id="CHEBI:57597"/>
    </ligand>
</feature>
<feature type="binding site" evidence="1">
    <location>
        <position position="140"/>
    </location>
    <ligand>
        <name>NADPH</name>
        <dbReference type="ChEBI" id="CHEBI:57783"/>
    </ligand>
</feature>
<feature type="binding site" evidence="1">
    <location>
        <position position="191"/>
    </location>
    <ligand>
        <name>sn-glycerol 3-phosphate</name>
        <dbReference type="ChEBI" id="CHEBI:57597"/>
    </ligand>
</feature>
<feature type="binding site" evidence="1">
    <location>
        <position position="244"/>
    </location>
    <ligand>
        <name>sn-glycerol 3-phosphate</name>
        <dbReference type="ChEBI" id="CHEBI:57597"/>
    </ligand>
</feature>
<feature type="binding site" evidence="1">
    <location>
        <position position="254"/>
    </location>
    <ligand>
        <name>sn-glycerol 3-phosphate</name>
        <dbReference type="ChEBI" id="CHEBI:57597"/>
    </ligand>
</feature>
<feature type="binding site" evidence="1">
    <location>
        <position position="255"/>
    </location>
    <ligand>
        <name>NADPH</name>
        <dbReference type="ChEBI" id="CHEBI:57783"/>
    </ligand>
</feature>
<feature type="binding site" evidence="1">
    <location>
        <position position="255"/>
    </location>
    <ligand>
        <name>sn-glycerol 3-phosphate</name>
        <dbReference type="ChEBI" id="CHEBI:57597"/>
    </ligand>
</feature>
<feature type="binding site" evidence="1">
    <location>
        <position position="256"/>
    </location>
    <ligand>
        <name>sn-glycerol 3-phosphate</name>
        <dbReference type="ChEBI" id="CHEBI:57597"/>
    </ligand>
</feature>
<feature type="binding site" evidence="1">
    <location>
        <position position="279"/>
    </location>
    <ligand>
        <name>NADPH</name>
        <dbReference type="ChEBI" id="CHEBI:57783"/>
    </ligand>
</feature>
<feature type="binding site" evidence="1">
    <location>
        <position position="281"/>
    </location>
    <ligand>
        <name>NADPH</name>
        <dbReference type="ChEBI" id="CHEBI:57783"/>
    </ligand>
</feature>
<gene>
    <name evidence="1" type="primary">gpsA</name>
    <name type="ordered locus">LBJ_0395</name>
</gene>
<sequence length="335" mass="36707">MKIGVIGSGSFGTALGSLLADKGYEVTLWCRNDSQIESINRNHINNKHLPDFTLPEKLTASKDLRTVVQGKDMIVSSPPSHALTEILREIKEYLPEKVPIVSASKGIENGTLRLVSEIFESELPGKYHSYLSYLSGPSFAKEIIQKVPTIVSIASRSETTARKVQEIFSFLYFRTYWTPDVIGVEVGGSLKNVIALAAGVSDGLGFGQNTRAALITRGLNEITKIGLKLGADPMTFLGPSGMGDLILTCCGEQSRNRTVGFRLGKGETLEQILSGMNEVAEGIKTTQSAYELSQKLGIEMAITNEVYKMLYEDKNPKEVVKDLMKRDLKREGVLV</sequence>
<keyword id="KW-0963">Cytoplasm</keyword>
<keyword id="KW-0444">Lipid biosynthesis</keyword>
<keyword id="KW-0443">Lipid metabolism</keyword>
<keyword id="KW-0520">NAD</keyword>
<keyword id="KW-0521">NADP</keyword>
<keyword id="KW-0547">Nucleotide-binding</keyword>
<keyword id="KW-0560">Oxidoreductase</keyword>
<keyword id="KW-0594">Phospholipid biosynthesis</keyword>
<keyword id="KW-1208">Phospholipid metabolism</keyword>
<protein>
    <recommendedName>
        <fullName evidence="1">Glycerol-3-phosphate dehydrogenase [NAD(P)+]</fullName>
        <ecNumber evidence="1">1.1.1.94</ecNumber>
    </recommendedName>
    <alternativeName>
        <fullName evidence="1">NAD(P)(+)-dependent glycerol-3-phosphate dehydrogenase</fullName>
    </alternativeName>
    <alternativeName>
        <fullName evidence="1">NAD(P)H-dependent dihydroxyacetone-phosphate reductase</fullName>
    </alternativeName>
</protein>
<proteinExistence type="inferred from homology"/>
<accession>Q04VF9</accession>